<comment type="function">
    <molecule>RNA replication polyprotein</molecule>
    <text evidence="1">RNA-directed RNA polymerase involved in viral RNA replication.</text>
</comment>
<comment type="function">
    <text evidence="1">Protease: Thiol protease that cleaves the polyprotein.</text>
</comment>
<comment type="catalytic activity">
    <reaction evidence="10">
        <text>ATP + H2O = ADP + phosphate + H(+)</text>
        <dbReference type="Rhea" id="RHEA:13065"/>
        <dbReference type="ChEBI" id="CHEBI:15377"/>
        <dbReference type="ChEBI" id="CHEBI:15378"/>
        <dbReference type="ChEBI" id="CHEBI:30616"/>
        <dbReference type="ChEBI" id="CHEBI:43474"/>
        <dbReference type="ChEBI" id="CHEBI:456216"/>
        <dbReference type="EC" id="3.6.4.13"/>
    </reaction>
</comment>
<comment type="catalytic activity">
    <reaction evidence="4">
        <text>RNA(n) + a ribonucleoside 5'-triphosphate = RNA(n+1) + diphosphate</text>
        <dbReference type="Rhea" id="RHEA:21248"/>
        <dbReference type="Rhea" id="RHEA-COMP:14527"/>
        <dbReference type="Rhea" id="RHEA-COMP:17342"/>
        <dbReference type="ChEBI" id="CHEBI:33019"/>
        <dbReference type="ChEBI" id="CHEBI:61557"/>
        <dbReference type="ChEBI" id="CHEBI:140395"/>
        <dbReference type="EC" id="2.7.7.48"/>
    </reaction>
</comment>
<comment type="cofactor">
    <cofactor evidence="5">
        <name>Fe(2+)</name>
        <dbReference type="ChEBI" id="CHEBI:29033"/>
    </cofactor>
    <text evidence="5">Binds 1 Fe(2+) ion per subunit.</text>
</comment>
<comment type="PTM">
    <text evidence="1">Specific enzymatic cleavages by the viral protease yield mature proteins.</text>
</comment>
<comment type="similarity">
    <text evidence="10">Belongs to the potexviruses/carlaviruses RNA replication protein family.</text>
</comment>
<protein>
    <recommendedName>
        <fullName evidence="1">RNA replication polyprotein</fullName>
    </recommendedName>
    <alternativeName>
        <fullName evidence="1">ORF1 protein</fullName>
    </alternativeName>
    <domain>
        <recommendedName>
            <fullName evidence="2">Viral methyltransferase</fullName>
            <ecNumber evidence="10">2.1.1.-</ecNumber>
        </recommendedName>
    </domain>
    <domain>
        <recommendedName>
            <fullName evidence="2">Putative Fe(2+) 2-oxoglutarate dioxygenase</fullName>
            <ecNumber evidence="5">1.14.11.-</ecNumber>
        </recommendedName>
    </domain>
    <domain>
        <recommendedName>
            <fullName evidence="1">Protease</fullName>
            <ecNumber evidence="1">3.4.22.-</ecNumber>
        </recommendedName>
    </domain>
    <domain>
        <recommendedName>
            <fullName evidence="4">RNA-directed RNA polymerase</fullName>
            <ecNumber evidence="4">2.7.7.48</ecNumber>
        </recommendedName>
    </domain>
    <component>
        <recommendedName>
            <fullName evidence="1">Helicase</fullName>
            <ecNumber evidence="10">3.6.4.13</ecNumber>
        </recommendedName>
    </component>
</protein>
<gene>
    <name evidence="1" type="ORF">ORF1</name>
</gene>
<keyword id="KW-0067">ATP-binding</keyword>
<keyword id="KW-0223">Dioxygenase</keyword>
<keyword id="KW-0347">Helicase</keyword>
<keyword id="KW-0378">Hydrolase</keyword>
<keyword id="KW-0408">Iron</keyword>
<keyword id="KW-0479">Metal-binding</keyword>
<keyword id="KW-0489">Methyltransferase</keyword>
<keyword id="KW-0511">Multifunctional enzyme</keyword>
<keyword id="KW-0547">Nucleotide-binding</keyword>
<keyword id="KW-0548">Nucleotidyltransferase</keyword>
<keyword id="KW-0560">Oxidoreductase</keyword>
<keyword id="KW-0645">Protease</keyword>
<keyword id="KW-1185">Reference proteome</keyword>
<keyword id="KW-0696">RNA-directed RNA polymerase</keyword>
<keyword id="KW-0788">Thiol protease</keyword>
<keyword id="KW-0808">Transferase</keyword>
<keyword id="KW-0693">Viral RNA replication</keyword>
<reference key="1">
    <citation type="journal article" date="1994" name="J. Gen. Virol.">
        <title>Nucleotide sequences of apple stem pitting virus and of the coat protein gene of a similar virus from pear associated with vein yellows disease and their relationship with potex- and carlaviruses.</title>
        <authorList>
            <person name="Jelkmann W."/>
        </authorList>
    </citation>
    <scope>NUCLEOTIDE SEQUENCE [GENOMIC RNA]</scope>
</reference>
<feature type="chain" id="PRO_0000401087" description="RNA replication polyprotein">
    <location>
        <begin position="1"/>
        <end position="2183"/>
    </location>
</feature>
<feature type="chain" id="PRO_0000431909" description="Helicase" evidence="1">
    <location>
        <begin position="1686"/>
        <end position="2177"/>
    </location>
</feature>
<feature type="domain" description="Alphavirus-like MT" evidence="8">
    <location>
        <begin position="63"/>
        <end position="256"/>
    </location>
</feature>
<feature type="domain" description="Fe2OG dioxygenase" evidence="5">
    <location>
        <begin position="762"/>
        <end position="853"/>
    </location>
</feature>
<feature type="domain" description="OTU" evidence="3">
    <location>
        <begin position="1091"/>
        <end position="1199"/>
    </location>
</feature>
<feature type="domain" description="Peptidase C23" evidence="6">
    <location>
        <begin position="1198"/>
        <end position="1288"/>
    </location>
</feature>
<feature type="domain" description="(+)RNA virus helicase ATP-binding" evidence="7">
    <location>
        <begin position="1349"/>
        <end position="1520"/>
    </location>
</feature>
<feature type="domain" description="(+)RNA virus helicase C-terminal" evidence="7">
    <location>
        <begin position="1521"/>
        <end position="1667"/>
    </location>
</feature>
<feature type="domain" description="RdRp catalytic" evidence="4">
    <location>
        <begin position="1961"/>
        <end position="2068"/>
    </location>
</feature>
<feature type="region of interest" description="Disordered" evidence="9">
    <location>
        <begin position="883"/>
        <end position="910"/>
    </location>
</feature>
<feature type="compositionally biased region" description="Basic and acidic residues" evidence="9">
    <location>
        <begin position="895"/>
        <end position="906"/>
    </location>
</feature>
<feature type="active site" evidence="1">
    <location>
        <position position="1202"/>
    </location>
</feature>
<feature type="active site" evidence="1">
    <location>
        <position position="1283"/>
    </location>
</feature>
<feature type="binding site" evidence="5">
    <location>
        <position position="780"/>
    </location>
    <ligand>
        <name>Fe cation</name>
        <dbReference type="ChEBI" id="CHEBI:24875"/>
    </ligand>
</feature>
<feature type="binding site" evidence="5">
    <location>
        <position position="782"/>
    </location>
    <ligand>
        <name>Fe cation</name>
        <dbReference type="ChEBI" id="CHEBI:24875"/>
    </ligand>
</feature>
<feature type="binding site" evidence="5">
    <location>
        <position position="835"/>
    </location>
    <ligand>
        <name>Fe cation</name>
        <dbReference type="ChEBI" id="CHEBI:24875"/>
    </ligand>
</feature>
<feature type="binding site" evidence="5">
    <location>
        <position position="844"/>
    </location>
    <ligand>
        <name>2-oxoglutarate</name>
        <dbReference type="ChEBI" id="CHEBI:16810"/>
    </ligand>
</feature>
<feature type="binding site" evidence="7">
    <location>
        <begin position="1374"/>
        <end position="1381"/>
    </location>
    <ligand>
        <name>ATP</name>
        <dbReference type="ChEBI" id="CHEBI:30616"/>
    </ligand>
</feature>
<feature type="site" description="Cleavage; by viral protease" evidence="1">
    <location>
        <begin position="1685"/>
        <end position="1686"/>
    </location>
</feature>
<dbReference type="EC" id="2.1.1.-" evidence="10"/>
<dbReference type="EC" id="1.14.11.-" evidence="5"/>
<dbReference type="EC" id="3.4.22.-" evidence="1"/>
<dbReference type="EC" id="2.7.7.48" evidence="4"/>
<dbReference type="EC" id="3.6.4.13" evidence="10"/>
<dbReference type="EMBL" id="D21829">
    <property type="protein sequence ID" value="BAA04853.1"/>
    <property type="molecule type" value="Genomic_RNA"/>
</dbReference>
<dbReference type="RefSeq" id="NP_604464.1">
    <property type="nucleotide sequence ID" value="NC_003462.2"/>
</dbReference>
<dbReference type="MEROPS" id="C23.001"/>
<dbReference type="KEGG" id="vg:935270"/>
<dbReference type="Proteomes" id="UP000000678">
    <property type="component" value="Segment"/>
</dbReference>
<dbReference type="GO" id="GO:0005524">
    <property type="term" value="F:ATP binding"/>
    <property type="evidence" value="ECO:0007669"/>
    <property type="project" value="UniProtKB-KW"/>
</dbReference>
<dbReference type="GO" id="GO:0016887">
    <property type="term" value="F:ATP hydrolysis activity"/>
    <property type="evidence" value="ECO:0007669"/>
    <property type="project" value="RHEA"/>
</dbReference>
<dbReference type="GO" id="GO:0008234">
    <property type="term" value="F:cysteine-type peptidase activity"/>
    <property type="evidence" value="ECO:0007669"/>
    <property type="project" value="UniProtKB-KW"/>
</dbReference>
<dbReference type="GO" id="GO:0051213">
    <property type="term" value="F:dioxygenase activity"/>
    <property type="evidence" value="ECO:0007669"/>
    <property type="project" value="UniProtKB-KW"/>
</dbReference>
<dbReference type="GO" id="GO:0046872">
    <property type="term" value="F:metal ion binding"/>
    <property type="evidence" value="ECO:0007669"/>
    <property type="project" value="UniProtKB-KW"/>
</dbReference>
<dbReference type="GO" id="GO:0008174">
    <property type="term" value="F:mRNA methyltransferase activity"/>
    <property type="evidence" value="ECO:0007669"/>
    <property type="project" value="InterPro"/>
</dbReference>
<dbReference type="GO" id="GO:0003723">
    <property type="term" value="F:RNA binding"/>
    <property type="evidence" value="ECO:0007669"/>
    <property type="project" value="InterPro"/>
</dbReference>
<dbReference type="GO" id="GO:0003724">
    <property type="term" value="F:RNA helicase activity"/>
    <property type="evidence" value="ECO:0007669"/>
    <property type="project" value="UniProtKB-EC"/>
</dbReference>
<dbReference type="GO" id="GO:0003968">
    <property type="term" value="F:RNA-directed RNA polymerase activity"/>
    <property type="evidence" value="ECO:0007669"/>
    <property type="project" value="UniProtKB-KW"/>
</dbReference>
<dbReference type="GO" id="GO:0006351">
    <property type="term" value="P:DNA-templated transcription"/>
    <property type="evidence" value="ECO:0007669"/>
    <property type="project" value="InterPro"/>
</dbReference>
<dbReference type="GO" id="GO:0032259">
    <property type="term" value="P:methylation"/>
    <property type="evidence" value="ECO:0007669"/>
    <property type="project" value="UniProtKB-KW"/>
</dbReference>
<dbReference type="GO" id="GO:0016556">
    <property type="term" value="P:mRNA modification"/>
    <property type="evidence" value="ECO:0007669"/>
    <property type="project" value="InterPro"/>
</dbReference>
<dbReference type="GO" id="GO:0006508">
    <property type="term" value="P:proteolysis"/>
    <property type="evidence" value="ECO:0007669"/>
    <property type="project" value="UniProtKB-KW"/>
</dbReference>
<dbReference type="GO" id="GO:0006396">
    <property type="term" value="P:RNA processing"/>
    <property type="evidence" value="ECO:0007669"/>
    <property type="project" value="InterPro"/>
</dbReference>
<dbReference type="GO" id="GO:0039694">
    <property type="term" value="P:viral RNA genome replication"/>
    <property type="evidence" value="ECO:0007669"/>
    <property type="project" value="InterPro"/>
</dbReference>
<dbReference type="CDD" id="cd23245">
    <property type="entry name" value="Betaflexiviridae_RdRp"/>
    <property type="match status" value="1"/>
</dbReference>
<dbReference type="CDD" id="cd22792">
    <property type="entry name" value="OTU_RDRP-like"/>
    <property type="match status" value="1"/>
</dbReference>
<dbReference type="Gene3D" id="2.60.120.590">
    <property type="entry name" value="Alpha-ketoglutarate-dependent dioxygenase AlkB-like"/>
    <property type="match status" value="1"/>
</dbReference>
<dbReference type="Gene3D" id="3.40.50.300">
    <property type="entry name" value="P-loop containing nucleotide triphosphate hydrolases"/>
    <property type="match status" value="1"/>
</dbReference>
<dbReference type="InterPro" id="IPR027351">
    <property type="entry name" value="(+)RNA_virus_helicase_core_dom"/>
</dbReference>
<dbReference type="InterPro" id="IPR037151">
    <property type="entry name" value="AlkB-like_sf"/>
</dbReference>
<dbReference type="InterPro" id="IPR002588">
    <property type="entry name" value="Alphavirus-like_MT_dom"/>
</dbReference>
<dbReference type="InterPro" id="IPR043502">
    <property type="entry name" value="DNA/RNA_pol_sf"/>
</dbReference>
<dbReference type="InterPro" id="IPR044861">
    <property type="entry name" value="IPNS-like_FE2OG_OXY"/>
</dbReference>
<dbReference type="InterPro" id="IPR003323">
    <property type="entry name" value="OTU_dom"/>
</dbReference>
<dbReference type="InterPro" id="IPR005123">
    <property type="entry name" value="Oxoglu/Fe-dep_dioxygenase_dom"/>
</dbReference>
<dbReference type="InterPro" id="IPR027417">
    <property type="entry name" value="P-loop_NTPase"/>
</dbReference>
<dbReference type="InterPro" id="IPR008041">
    <property type="entry name" value="Peptidase_C23"/>
</dbReference>
<dbReference type="InterPro" id="IPR001788">
    <property type="entry name" value="RNA-dep_RNA_pol_alsuvir"/>
</dbReference>
<dbReference type="InterPro" id="IPR007094">
    <property type="entry name" value="RNA-dir_pol_PSvirus"/>
</dbReference>
<dbReference type="Pfam" id="PF03171">
    <property type="entry name" value="2OG-FeII_Oxy"/>
    <property type="match status" value="1"/>
</dbReference>
<dbReference type="Pfam" id="PF05379">
    <property type="entry name" value="Peptidase_C23"/>
    <property type="match status" value="1"/>
</dbReference>
<dbReference type="Pfam" id="PF00978">
    <property type="entry name" value="RdRP_2"/>
    <property type="match status" value="1"/>
</dbReference>
<dbReference type="Pfam" id="PF01443">
    <property type="entry name" value="Viral_helicase1"/>
    <property type="match status" value="1"/>
</dbReference>
<dbReference type="Pfam" id="PF01660">
    <property type="entry name" value="Vmethyltransf"/>
    <property type="match status" value="1"/>
</dbReference>
<dbReference type="SUPFAM" id="SSF51197">
    <property type="entry name" value="Clavaminate synthase-like"/>
    <property type="match status" value="1"/>
</dbReference>
<dbReference type="SUPFAM" id="SSF56672">
    <property type="entry name" value="DNA/RNA polymerases"/>
    <property type="match status" value="1"/>
</dbReference>
<dbReference type="SUPFAM" id="SSF52540">
    <property type="entry name" value="P-loop containing nucleoside triphosphate hydrolases"/>
    <property type="match status" value="1"/>
</dbReference>
<dbReference type="PROSITE" id="PS51743">
    <property type="entry name" value="ALPHAVIRUS_MT"/>
    <property type="match status" value="1"/>
</dbReference>
<dbReference type="PROSITE" id="PS51471">
    <property type="entry name" value="FE2OG_OXY"/>
    <property type="match status" value="1"/>
</dbReference>
<dbReference type="PROSITE" id="PS50802">
    <property type="entry name" value="OTU"/>
    <property type="match status" value="1"/>
</dbReference>
<dbReference type="PROSITE" id="PS51492">
    <property type="entry name" value="PEPTIDASE_C23"/>
    <property type="match status" value="1"/>
</dbReference>
<dbReference type="PROSITE" id="PS51657">
    <property type="entry name" value="PSRV_HELICASE"/>
    <property type="match status" value="1"/>
</dbReference>
<dbReference type="PROSITE" id="PS50507">
    <property type="entry name" value="RDRP_SSRNA_POS"/>
    <property type="match status" value="1"/>
</dbReference>
<organism>
    <name type="scientific">Apple stem pitting virus (isolate PA66)</name>
    <name type="common">ASPV</name>
    <dbReference type="NCBI Taxonomy" id="651356"/>
    <lineage>
        <taxon>Viruses</taxon>
        <taxon>Riboviria</taxon>
        <taxon>Orthornavirae</taxon>
        <taxon>Kitrinoviricota</taxon>
        <taxon>Alsuviricetes</taxon>
        <taxon>Tymovirales</taxon>
        <taxon>Betaflexiviridae</taxon>
        <taxon>Quinvirinae</taxon>
        <taxon>Foveavirus</taxon>
        <taxon>Foveavirus mali</taxon>
    </lineage>
</organism>
<name>RDRP_ASPVP</name>
<proteinExistence type="inferred from homology"/>
<evidence type="ECO:0000250" key="1">
    <source>
        <dbReference type="UniProtKB" id="Q65652"/>
    </source>
</evidence>
<evidence type="ECO:0000255" key="2"/>
<evidence type="ECO:0000255" key="3">
    <source>
        <dbReference type="PROSITE-ProRule" id="PRU00139"/>
    </source>
</evidence>
<evidence type="ECO:0000255" key="4">
    <source>
        <dbReference type="PROSITE-ProRule" id="PRU00539"/>
    </source>
</evidence>
<evidence type="ECO:0000255" key="5">
    <source>
        <dbReference type="PROSITE-ProRule" id="PRU00805"/>
    </source>
</evidence>
<evidence type="ECO:0000255" key="6">
    <source>
        <dbReference type="PROSITE-ProRule" id="PRU00825"/>
    </source>
</evidence>
<evidence type="ECO:0000255" key="7">
    <source>
        <dbReference type="PROSITE-ProRule" id="PRU00990"/>
    </source>
</evidence>
<evidence type="ECO:0000255" key="8">
    <source>
        <dbReference type="PROSITE-ProRule" id="PRU01079"/>
    </source>
</evidence>
<evidence type="ECO:0000256" key="9">
    <source>
        <dbReference type="SAM" id="MobiDB-lite"/>
    </source>
</evidence>
<evidence type="ECO:0000305" key="10"/>
<organismHost>
    <name type="scientific">Crataegus</name>
    <name type="common">hawthorn</name>
    <dbReference type="NCBI Taxonomy" id="23159"/>
</organismHost>
<organismHost>
    <name type="scientific">Malus sieboldii</name>
    <dbReference type="NCBI Taxonomy" id="106566"/>
</organismHost>
<organismHost>
    <name type="scientific">Malus sylvestris</name>
    <name type="common">European crab apple</name>
    <dbReference type="NCBI Taxonomy" id="3752"/>
</organismHost>
<organismHost>
    <name type="scientific">Pyrus communis</name>
    <name type="common">Pear</name>
    <name type="synonym">Pyrus domestica</name>
    <dbReference type="NCBI Taxonomy" id="23211"/>
</organismHost>
<sequence length="2183" mass="247262">MALLSRTAAEEVIASFTSEEQSRISTQAVLALTNVEKDKHDLFNYALPELAKMRLFNSGIYLSPHSYRPHSHPVCKTLENNILFNILPSYLDNSFYLVSIKKNKVDFLKRRHPDLQMVETINRYISSIDKTRYGGFFHVSPSKISAKFKCDRRTGFEDDASLIDLIPGCMEGARKRFFFHDELHYWTKEALITFLDHVKPEVMLASIVFPPEILAGAKESLNPWCYTFRIVGKDLVFFPDGEQSEAYIQPVAGSYLLRTGKITTPSGDIFQLDLLKSSFSHHLISITKGEAIGQKMRFFNGFEAVAMKGLNPLRRKVESCLPISKNTILKIYRYLRTLKKPDLQSAMAKLSQVCKDPNGYEIKFFEEFSKLCLKCDTLNTNMIPDMKRIVQGFFLKLFPNPISRNFKVVQQLHLDNFIETLEEFNFSINTESLSLNWKDDLEFVNLTFGDTDFNVEDSFAEAWGTKKDVVNITTVHHSPYLVSKFESYDHQFHSILSVKSISALTRIAKIVLSLYDPCVVEAFSESRVTNLAVNVIIAANLRACFAVTDLWRIFEGILLKECKRAQGKMRKRFHFELGIRWFLFVDVSNQWFLPPCRDGLIARSVSFDQFIKGCQRDNSLHNGRMSLRQVLKGPKLQALFDVSELSIIHNVEMENAPEAGSTLDAGIKPTSSPLEVVPIENARCNLAPCKCDLNCFIQPADVNSLHGNLVFLDFIGGSKGRGASFYSRDLKGYSYTGFSHVSRGWPAFLDKFLSDNKIPLNFYNQCLVQEYSTGHGLSMHKDDESIYDINHQVLTVNYSGDAIFCIECLGSGFEIPLSGPQMLLMPFGFQKEHRHGIKSPSKGRISLTFRLTKEGDSQVPIQEVVTICDHGDSDDRAALKALERRSHQSGGRPAVELEGHEREKVNSDSSDSAPVQEFLIQIDSSLLEYALKSLSGLSKNVVNCDMCLCNSPWLKNEELRFSEALRDLAFAQGLIQLIDFLCLKVLRCAEVNRIISELPTHVFPLRGTMHIVDLDDESIRGDVKEGSFSGFRRWKVMSCSTDLIMLAFLKPKMTLGGELRSHEDECELSDLTEKLHGCSVILSRKFEPDLFHSFDVEADGNCFWHSVGPLIGVDGEYLKRILHDQAKKDGVKCPRLSKQLEGNTWAEREAVAYFCSHYGIRLNVLYTREECTWIFKPHEVLKAATLICQDNHFKPCMPVNGCVIRAISSALNRREVDVLAVLGKPAHEDLFEEVAEGRGFSIFDLTRLFEIFSICGSVDTGGELIMVNENGRIPAEFSLEKEHLAHIPTLSRRKFSPIVSDLNRVSNSAMRFLAINGAEVDYRPSIDRASTLLDSFEIGATGVLCQGIKEAQKDLASKLIPELVHERKLIMILGTFGCGKSSLFKKFIEKSPGKAITFVSPRRSLAESINHDLGLARVGGKKTGKSKDLKNVRVKTFELFILHLDSIKEGHTVVIDEIQLFPPGYIDLIILGLKPNVNIIIAGDPCQSDYDCSSDRHIFAGSESDIMRILSGRSYKFNILSQRFRNPVFYGRLPCNLNKTRLTLDEEEYTLWDSIQEFSMMGRKDCPVVLVSSFEEKKIVAAHLGLKMKCITYGESTGLNFQKGAILVTYESALTSDRRWWTALSRFSHDIHFINGMGVTWDNAITHFVGKPLHKFFTKRACNDDIIDLLPGRPELIEGFQSQVGADEGVREAKLVGDPWLKTKIFLGQNPDFEIEIADEVEAAEDWFKTHIPIMSLEAVRAQWVHKLISREDREFRIGDITTEQFTDDHSKNRGQELTNAAERYEAIYPRHKGTDTATFLMAVKKRLSFSSPAAEHAKLRRAKPFGKFLLDTFLKRVPLNSSHDEKMMQEAVHAFEEKKLSKSMATIENHSGRSCEDWPVDKALIFMKSQLCTKFDNRFRSAKAGQTLACFQHSVLCRFAPYMRYIESKVTEVLPKNLYIHSGKNIDDLAAWVTTSKFNGVCTESDYEAFDASQDHFILAFELEVMKFLGLPSDLIADYTFIKTHLGSKLGSFAIMRFTGEASTFLFNTMANMLFTFLRYDLNGREAICFAGDDMCANSRLKVTNRFSNFLDKIKLKAKVQFTATPTFCGWGLCEHGVFKKPDLVLERLQIARETRNLENCIDNYAIEVSCAYKMGENLNLYLTPQEVDAHYNCVRFIVQHNHLLKSNIRDLFKGESLPASS</sequence>
<accession>Q64962</accession>